<dbReference type="EMBL" id="AB026651">
    <property type="protein sequence ID" value="BAB11302.1"/>
    <property type="molecule type" value="Genomic_DNA"/>
</dbReference>
<dbReference type="EMBL" id="CP002688">
    <property type="protein sequence ID" value="AED95005.1"/>
    <property type="molecule type" value="Genomic_DNA"/>
</dbReference>
<dbReference type="EMBL" id="BT004156">
    <property type="protein sequence ID" value="AAO42177.1"/>
    <property type="molecule type" value="mRNA"/>
</dbReference>
<dbReference type="EMBL" id="BT005490">
    <property type="protein sequence ID" value="AAO63910.1"/>
    <property type="molecule type" value="mRNA"/>
</dbReference>
<dbReference type="EMBL" id="AY085676">
    <property type="protein sequence ID" value="AAM62895.1"/>
    <property type="molecule type" value="mRNA"/>
</dbReference>
<dbReference type="RefSeq" id="NP_568629.1">
    <property type="nucleotide sequence ID" value="NM_123742.3"/>
</dbReference>
<dbReference type="PDB" id="7WFF">
    <property type="method" value="EM"/>
    <property type="resolution" value="3.59 A"/>
    <property type="chains" value="e=1-212"/>
</dbReference>
<dbReference type="PDB" id="7WG5">
    <property type="method" value="EM"/>
    <property type="resolution" value="3.89 A"/>
    <property type="chains" value="e=1-212"/>
</dbReference>
<dbReference type="PDBsum" id="7WFF"/>
<dbReference type="PDBsum" id="7WG5"/>
<dbReference type="EMDB" id="EMD-32464"/>
<dbReference type="EMDB" id="EMD-32477"/>
<dbReference type="SMR" id="Q9FG89"/>
<dbReference type="FunCoup" id="Q9FG89">
    <property type="interactions" value="1492"/>
</dbReference>
<dbReference type="IntAct" id="Q9FG89">
    <property type="interactions" value="12"/>
</dbReference>
<dbReference type="STRING" id="3702.Q9FG89"/>
<dbReference type="TCDB" id="3.D.1.8.1">
    <property type="family name" value="the h+ or na+-translocating nadh dehydrogenase (ndh) family"/>
</dbReference>
<dbReference type="PaxDb" id="3702-AT5G43750.1"/>
<dbReference type="ProteomicsDB" id="234695"/>
<dbReference type="EnsemblPlants" id="AT5G43750.1">
    <property type="protein sequence ID" value="AT5G43750.1"/>
    <property type="gene ID" value="AT5G43750"/>
</dbReference>
<dbReference type="GeneID" id="834396"/>
<dbReference type="Gramene" id="AT5G43750.1">
    <property type="protein sequence ID" value="AT5G43750.1"/>
    <property type="gene ID" value="AT5G43750"/>
</dbReference>
<dbReference type="KEGG" id="ath:AT5G43750"/>
<dbReference type="Araport" id="AT5G43750"/>
<dbReference type="TAIR" id="AT5G43750">
    <property type="gene designation" value="PNSB5"/>
</dbReference>
<dbReference type="eggNOG" id="ENOG502R1NE">
    <property type="taxonomic scope" value="Eukaryota"/>
</dbReference>
<dbReference type="HOGENOM" id="CLU_077245_1_0_1"/>
<dbReference type="InParanoid" id="Q9FG89"/>
<dbReference type="OMA" id="EDPRDRW"/>
<dbReference type="OrthoDB" id="1925600at2759"/>
<dbReference type="PhylomeDB" id="Q9FG89"/>
<dbReference type="PRO" id="PR:Q9FG89"/>
<dbReference type="Proteomes" id="UP000006548">
    <property type="component" value="Chromosome 5"/>
</dbReference>
<dbReference type="ExpressionAtlas" id="Q9FG89">
    <property type="expression patterns" value="baseline and differential"/>
</dbReference>
<dbReference type="GO" id="GO:0009507">
    <property type="term" value="C:chloroplast"/>
    <property type="evidence" value="ECO:0007005"/>
    <property type="project" value="TAIR"/>
</dbReference>
<dbReference type="GO" id="GO:0031969">
    <property type="term" value="C:chloroplast membrane"/>
    <property type="evidence" value="ECO:0007669"/>
    <property type="project" value="UniProtKB-SubCell"/>
</dbReference>
<dbReference type="GO" id="GO:0009535">
    <property type="term" value="C:chloroplast thylakoid membrane"/>
    <property type="evidence" value="ECO:0007005"/>
    <property type="project" value="TAIR"/>
</dbReference>
<dbReference type="GO" id="GO:0009536">
    <property type="term" value="C:plastid"/>
    <property type="evidence" value="ECO:0007005"/>
    <property type="project" value="TAIR"/>
</dbReference>
<dbReference type="GO" id="GO:0006979">
    <property type="term" value="P:response to oxidative stress"/>
    <property type="evidence" value="ECO:0000315"/>
    <property type="project" value="TAIR"/>
</dbReference>
<dbReference type="InterPro" id="IPR034569">
    <property type="entry name" value="PNSB5"/>
</dbReference>
<dbReference type="PANTHER" id="PTHR36399">
    <property type="entry name" value="PHOTOSYNTHETIC NDH SUBUNIT OF SUBCOMPLEX B 5, CHLOROPLASTIC"/>
    <property type="match status" value="1"/>
</dbReference>
<dbReference type="PANTHER" id="PTHR36399:SF1">
    <property type="entry name" value="PHOTOSYNTHETIC NDH SUBUNIT OF SUBCOMPLEX B 5, CHLOROPLASTIC"/>
    <property type="match status" value="1"/>
</dbReference>
<reference key="1">
    <citation type="submission" date="1999-04" db="EMBL/GenBank/DDBJ databases">
        <title>Structural analysis of Arabidopsis thaliana chromosome 5. XI.</title>
        <authorList>
            <person name="Kaneko T."/>
            <person name="Katoh T."/>
            <person name="Asamizu E."/>
            <person name="Sato S."/>
            <person name="Nakamura Y."/>
            <person name="Kotani H."/>
            <person name="Tabata S."/>
        </authorList>
    </citation>
    <scope>NUCLEOTIDE SEQUENCE [LARGE SCALE GENOMIC DNA]</scope>
    <source>
        <strain>cv. Columbia</strain>
    </source>
</reference>
<reference key="2">
    <citation type="journal article" date="2017" name="Plant J.">
        <title>Araport11: a complete reannotation of the Arabidopsis thaliana reference genome.</title>
        <authorList>
            <person name="Cheng C.Y."/>
            <person name="Krishnakumar V."/>
            <person name="Chan A.P."/>
            <person name="Thibaud-Nissen F."/>
            <person name="Schobel S."/>
            <person name="Town C.D."/>
        </authorList>
    </citation>
    <scope>GENOME REANNOTATION</scope>
    <source>
        <strain>cv. Columbia</strain>
    </source>
</reference>
<reference key="3">
    <citation type="journal article" date="2003" name="Science">
        <title>Empirical analysis of transcriptional activity in the Arabidopsis genome.</title>
        <authorList>
            <person name="Yamada K."/>
            <person name="Lim J."/>
            <person name="Dale J.M."/>
            <person name="Chen H."/>
            <person name="Shinn P."/>
            <person name="Palm C.J."/>
            <person name="Southwick A.M."/>
            <person name="Wu H.C."/>
            <person name="Kim C.J."/>
            <person name="Nguyen M."/>
            <person name="Pham P.K."/>
            <person name="Cheuk R.F."/>
            <person name="Karlin-Newmann G."/>
            <person name="Liu S.X."/>
            <person name="Lam B."/>
            <person name="Sakano H."/>
            <person name="Wu T."/>
            <person name="Yu G."/>
            <person name="Miranda M."/>
            <person name="Quach H.L."/>
            <person name="Tripp M."/>
            <person name="Chang C.H."/>
            <person name="Lee J.M."/>
            <person name="Toriumi M.J."/>
            <person name="Chan M.M."/>
            <person name="Tang C.C."/>
            <person name="Onodera C.S."/>
            <person name="Deng J.M."/>
            <person name="Akiyama K."/>
            <person name="Ansari Y."/>
            <person name="Arakawa T."/>
            <person name="Banh J."/>
            <person name="Banno F."/>
            <person name="Bowser L."/>
            <person name="Brooks S.Y."/>
            <person name="Carninci P."/>
            <person name="Chao Q."/>
            <person name="Choy N."/>
            <person name="Enju A."/>
            <person name="Goldsmith A.D."/>
            <person name="Gurjal M."/>
            <person name="Hansen N.F."/>
            <person name="Hayashizaki Y."/>
            <person name="Johnson-Hopson C."/>
            <person name="Hsuan V.W."/>
            <person name="Iida K."/>
            <person name="Karnes M."/>
            <person name="Khan S."/>
            <person name="Koesema E."/>
            <person name="Ishida J."/>
            <person name="Jiang P.X."/>
            <person name="Jones T."/>
            <person name="Kawai J."/>
            <person name="Kamiya A."/>
            <person name="Meyers C."/>
            <person name="Nakajima M."/>
            <person name="Narusaka M."/>
            <person name="Seki M."/>
            <person name="Sakurai T."/>
            <person name="Satou M."/>
            <person name="Tamse R."/>
            <person name="Vaysberg M."/>
            <person name="Wallender E.K."/>
            <person name="Wong C."/>
            <person name="Yamamura Y."/>
            <person name="Yuan S."/>
            <person name="Shinozaki K."/>
            <person name="Davis R.W."/>
            <person name="Theologis A."/>
            <person name="Ecker J.R."/>
        </authorList>
    </citation>
    <scope>NUCLEOTIDE SEQUENCE [LARGE SCALE MRNA]</scope>
    <source>
        <strain>cv. Columbia</strain>
    </source>
</reference>
<reference key="4">
    <citation type="submission" date="2002-03" db="EMBL/GenBank/DDBJ databases">
        <title>Full-length cDNA from Arabidopsis thaliana.</title>
        <authorList>
            <person name="Brover V.V."/>
            <person name="Troukhan M.E."/>
            <person name="Alexandrov N.A."/>
            <person name="Lu Y.-P."/>
            <person name="Flavell R.B."/>
            <person name="Feldmann K.A."/>
        </authorList>
    </citation>
    <scope>NUCLEOTIDE SEQUENCE [LARGE SCALE MRNA]</scope>
</reference>
<reference key="5">
    <citation type="journal article" date="2009" name="Mol. Plant">
        <title>Towards characterization of the chloroplast NAD(P)H dehydrogenase complex.</title>
        <authorList>
            <person name="Suorsa M."/>
            <person name="Sirpioe S."/>
            <person name="Aro E.M."/>
        </authorList>
    </citation>
    <scope>REVIEW</scope>
</reference>
<reference key="6">
    <citation type="journal article" date="2009" name="Plant Cell">
        <title>Efficient operation of NAD(P)H dehydrogenase requires supercomplex formation with photosystem I via minor LHCI in Arabidopsis.</title>
        <authorList>
            <person name="Peng L."/>
            <person name="Fukao Y."/>
            <person name="Fujiwara M."/>
            <person name="Takami T."/>
            <person name="Shikanai T."/>
        </authorList>
    </citation>
    <scope>COMPONENT OF THE NDH COMPLEX</scope>
</reference>
<reference key="7">
    <citation type="journal article" date="2011" name="Biochim. Biophys. Acta">
        <title>Structure and biogenesis of the chloroplast NAD(P)H dehydrogenase complex.</title>
        <authorList>
            <person name="Peng L."/>
            <person name="Yamamoto H."/>
            <person name="Shikanai T."/>
        </authorList>
    </citation>
    <scope>REVIEW</scope>
</reference>
<reference key="8">
    <citation type="journal article" date="2011" name="Plant Cell Physiol.">
        <title>Structure of the chloroplast NADH dehydrogenase-like complex: nomenclature for nuclear-encoded subunits.</title>
        <authorList>
            <person name="Ifuku K."/>
            <person name="Endo T."/>
            <person name="Shikanai T."/>
            <person name="Aro E.M."/>
        </authorList>
    </citation>
    <scope>NOMENCLATURE</scope>
    <scope>COMPONENT OF THE NDH COMPLEX</scope>
</reference>
<sequence length="212" mass="23746">MATVTILSPKSIPKVTDSKFGARVSDQIVNVVKCGKSGRRLKLAKLVSAAGLSQIEPDINEDPIGQFETNSIEMEDFKYGYYDGAHTYYEGEVQKGTFWGAIADDIAAVDQTNGFQGLISCMFLPAIALGMYFDAPGEYLFIGAALFTVVFCIIEMDKPDQPHNFEPQIYKLERGARDKLINDYNTMSIWDFNDKYGDVWDFTIEKDDIATR</sequence>
<proteinExistence type="evidence at protein level"/>
<evidence type="ECO:0000255" key="1"/>
<evidence type="ECO:0000269" key="2">
    <source>
    </source>
</evidence>
<evidence type="ECO:0000269" key="3">
    <source>
    </source>
</evidence>
<evidence type="ECO:0000303" key="4">
    <source>
    </source>
</evidence>
<evidence type="ECO:0000303" key="5">
    <source>
    </source>
</evidence>
<evidence type="ECO:0000305" key="6"/>
<evidence type="ECO:0000312" key="7">
    <source>
        <dbReference type="Araport" id="AT5G43750"/>
    </source>
</evidence>
<evidence type="ECO:0000312" key="8">
    <source>
        <dbReference type="EMBL" id="AED95005.1"/>
    </source>
</evidence>
<evidence type="ECO:0000312" key="9">
    <source>
        <dbReference type="EMBL" id="BAB11302.1"/>
    </source>
</evidence>
<keyword id="KW-0002">3D-structure</keyword>
<keyword id="KW-0150">Chloroplast</keyword>
<keyword id="KW-0472">Membrane</keyword>
<keyword id="KW-0934">Plastid</keyword>
<keyword id="KW-1185">Reference proteome</keyword>
<keyword id="KW-0809">Transit peptide</keyword>
<keyword id="KW-0812">Transmembrane</keyword>
<keyword id="KW-1133">Transmembrane helix</keyword>
<keyword id="KW-0813">Transport</keyword>
<name>PNSB5_ARATH</name>
<gene>
    <name evidence="5" type="primary">PNSB5</name>
    <name evidence="4" type="synonym">NDH18</name>
    <name evidence="7" type="ordered locus">At5g43750</name>
    <name evidence="9" type="ORF">MQD19.9</name>
</gene>
<comment type="function">
    <text evidence="6">NDH shuttles electrons from NAD(P)H:plastoquinone, via FMN and iron-sulfur (Fe-S) centers, to quinones in the photosynthetic chain and possibly in a chloroplast respiratory chain. The immediate electron acceptor for the enzyme in this species is believed to be plastoquinone. Couples the redox reaction to proton translocation, and thus conserves the redox energy in a proton gradient.</text>
</comment>
<comment type="subunit">
    <text evidence="2 3">Part of the chloroplast NDH complex, composed of a mixture of chloroplast and nucleus encoded subunits. Component of the NDH subcomplex B, at least composed of PnsB1, PnsB2, PnsB3, PnsB4 and PnsB5.</text>
</comment>
<comment type="subcellular location">
    <subcellularLocation>
        <location evidence="1">Plastid</location>
        <location evidence="1">Chloroplast membrane</location>
        <topology evidence="1">Multi-pass membrane protein</topology>
    </subcellularLocation>
</comment>
<protein>
    <recommendedName>
        <fullName evidence="5">Photosynthetic NDH subunit of subcomplex B 5, chloroplastic</fullName>
        <shortName evidence="5">Protein PnsB5</shortName>
    </recommendedName>
    <alternativeName>
        <fullName evidence="8">NAD(P)H dehydrogenase 18</fullName>
    </alternativeName>
</protein>
<feature type="transit peptide" description="Chloroplast" evidence="1">
    <location>
        <begin position="1"/>
        <end position="48"/>
    </location>
</feature>
<feature type="chain" id="PRO_0000431823" description="Photosynthetic NDH subunit of subcomplex B 5, chloroplastic">
    <location>
        <begin position="49"/>
        <end position="212"/>
    </location>
</feature>
<feature type="transmembrane region" description="Helical; Name=1" evidence="1">
    <location>
        <begin position="115"/>
        <end position="135"/>
    </location>
</feature>
<feature type="transmembrane region" description="Helical; Name=2" evidence="1">
    <location>
        <begin position="136"/>
        <end position="156"/>
    </location>
</feature>
<feature type="sequence conflict" description="In Ref. 4; AAM62895." evidence="6" ref="4">
    <original>I</original>
    <variation>T</variation>
    <location>
        <position position="28"/>
    </location>
</feature>
<feature type="sequence conflict" description="In Ref. 4; AAM62895." evidence="6" ref="4">
    <original>GK</original>
    <variation>SN</variation>
    <location>
        <begin position="35"/>
        <end position="36"/>
    </location>
</feature>
<feature type="sequence conflict" description="In Ref. 4; AAM62895." evidence="6" ref="4">
    <original>K</original>
    <variation>R</variation>
    <location>
        <position position="42"/>
    </location>
</feature>
<accession>Q9FG89</accession>
<accession>Q8LE15</accession>
<organism>
    <name type="scientific">Arabidopsis thaliana</name>
    <name type="common">Mouse-ear cress</name>
    <dbReference type="NCBI Taxonomy" id="3702"/>
    <lineage>
        <taxon>Eukaryota</taxon>
        <taxon>Viridiplantae</taxon>
        <taxon>Streptophyta</taxon>
        <taxon>Embryophyta</taxon>
        <taxon>Tracheophyta</taxon>
        <taxon>Spermatophyta</taxon>
        <taxon>Magnoliopsida</taxon>
        <taxon>eudicotyledons</taxon>
        <taxon>Gunneridae</taxon>
        <taxon>Pentapetalae</taxon>
        <taxon>rosids</taxon>
        <taxon>malvids</taxon>
        <taxon>Brassicales</taxon>
        <taxon>Brassicaceae</taxon>
        <taxon>Camelineae</taxon>
        <taxon>Arabidopsis</taxon>
    </lineage>
</organism>